<reference key="1">
    <citation type="journal article" date="2002" name="J. Bacteriol.">
        <title>Whole-genome comparison of Mycobacterium tuberculosis clinical and laboratory strains.</title>
        <authorList>
            <person name="Fleischmann R.D."/>
            <person name="Alland D."/>
            <person name="Eisen J.A."/>
            <person name="Carpenter L."/>
            <person name="White O."/>
            <person name="Peterson J.D."/>
            <person name="DeBoy R.T."/>
            <person name="Dodson R.J."/>
            <person name="Gwinn M.L."/>
            <person name="Haft D.H."/>
            <person name="Hickey E.K."/>
            <person name="Kolonay J.F."/>
            <person name="Nelson W.C."/>
            <person name="Umayam L.A."/>
            <person name="Ermolaeva M.D."/>
            <person name="Salzberg S.L."/>
            <person name="Delcher A."/>
            <person name="Utterback T.R."/>
            <person name="Weidman J.F."/>
            <person name="Khouri H.M."/>
            <person name="Gill J."/>
            <person name="Mikula A."/>
            <person name="Bishai W."/>
            <person name="Jacobs W.R. Jr."/>
            <person name="Venter J.C."/>
            <person name="Fraser C.M."/>
        </authorList>
    </citation>
    <scope>NUCLEOTIDE SEQUENCE [LARGE SCALE GENOMIC DNA]</scope>
    <source>
        <strain>CDC 1551 / Oshkosh</strain>
    </source>
</reference>
<gene>
    <name type="primary">vapB21</name>
    <name type="ordered locus">MT2828</name>
</gene>
<organism>
    <name type="scientific">Mycobacterium tuberculosis (strain CDC 1551 / Oshkosh)</name>
    <dbReference type="NCBI Taxonomy" id="83331"/>
    <lineage>
        <taxon>Bacteria</taxon>
        <taxon>Bacillati</taxon>
        <taxon>Actinomycetota</taxon>
        <taxon>Actinomycetes</taxon>
        <taxon>Mycobacteriales</taxon>
        <taxon>Mycobacteriaceae</taxon>
        <taxon>Mycobacterium</taxon>
        <taxon>Mycobacterium tuberculosis complex</taxon>
    </lineage>
</organism>
<name>VPB21_MYCTO</name>
<evidence type="ECO:0000250" key="1"/>
<dbReference type="EMBL" id="AE000516">
    <property type="protein sequence ID" value="AAK47147.1"/>
    <property type="molecule type" value="Genomic_DNA"/>
</dbReference>
<dbReference type="PIR" id="E70880">
    <property type="entry name" value="E70880"/>
</dbReference>
<dbReference type="RefSeq" id="WP_003414061.1">
    <property type="nucleotide sequence ID" value="NZ_KK341227.1"/>
</dbReference>
<dbReference type="SMR" id="P9WJ42"/>
<dbReference type="KEGG" id="mtc:MT2828"/>
<dbReference type="PATRIC" id="fig|83331.31.peg.3049"/>
<dbReference type="HOGENOM" id="CLU_2667130_0_0_11"/>
<dbReference type="Proteomes" id="UP000001020">
    <property type="component" value="Chromosome"/>
</dbReference>
<dbReference type="InterPro" id="IPR019239">
    <property type="entry name" value="VapB_antitoxin"/>
</dbReference>
<dbReference type="Pfam" id="PF09957">
    <property type="entry name" value="VapB_antitoxin"/>
    <property type="match status" value="1"/>
</dbReference>
<comment type="function">
    <text evidence="1">Antitoxin component of a type II toxin-antitoxin (TA) system.</text>
</comment>
<proteinExistence type="inferred from homology"/>
<keyword id="KW-1185">Reference proteome</keyword>
<keyword id="KW-1277">Toxin-antitoxin system</keyword>
<accession>P9WJ42</accession>
<accession>L0TDH0</accession>
<accession>O33300</accession>
<accession>Q7D6M8</accession>
<sequence length="88" mass="9494">MHRGYALVVCSPGVTRTMIDIDDDLLARAAKELGTTTKKDTVHAALRAALRASAARSLMNRMAENATGTQDEALVNAMWRDGHPENTA</sequence>
<protein>
    <recommendedName>
        <fullName>Antitoxin VapB21</fullName>
    </recommendedName>
</protein>
<feature type="chain" id="PRO_0000427895" description="Antitoxin VapB21">
    <location>
        <begin position="1"/>
        <end position="88"/>
    </location>
</feature>